<keyword id="KW-0233">DNA recombination</keyword>
<keyword id="KW-0235">DNA replication</keyword>
<keyword id="KW-0255">Endonuclease</keyword>
<keyword id="KW-0269">Exonuclease</keyword>
<keyword id="KW-0378">Hydrolase</keyword>
<keyword id="KW-0540">Nuclease</keyword>
<feature type="chain" id="PRO_0000338490" description="Nuclease SbcCD subunit D">
    <location>
        <begin position="1"/>
        <end position="373"/>
    </location>
</feature>
<evidence type="ECO:0000250" key="1"/>
<evidence type="ECO:0000305" key="2"/>
<sequence>MKIIHTADWHLGKILNGKQLLEDQAYILDMFVEKMKEEEPDIIVIAGDLYDTTYPSKDAIMLLEQAIGKLNLELRIPIIIISGNHDGKERLNYGASWFEHNQLFIRTDFTSINSPIEINGVNFYTLPYATVSEMKHYFEDDTIETHQQGITRCIETIAPEIDEDAVNILISHLTVQGGKTSDSERPLTIGTVESVQKGVFDIFDYVMLGHLHHPFSIEDDKIKYSGSLLQYSFSEAGQAKGYRRVTINDGIINDVFIPLKPLRQLEIISGEYNDVINEKVHVKNKDNYLHFKLKNMSHITDPMMSLKQIYPNTLALTNETFNYNEENNAIEISEKDDMSIIEMFYKHITDKELSDIQSKKIKNILENELRKED</sequence>
<protein>
    <recommendedName>
        <fullName>Nuclease SbcCD subunit D</fullName>
    </recommendedName>
</protein>
<organism>
    <name type="scientific">Staphylococcus aureus (strain USA300 / TCH1516)</name>
    <dbReference type="NCBI Taxonomy" id="451516"/>
    <lineage>
        <taxon>Bacteria</taxon>
        <taxon>Bacillati</taxon>
        <taxon>Bacillota</taxon>
        <taxon>Bacilli</taxon>
        <taxon>Bacillales</taxon>
        <taxon>Staphylococcaceae</taxon>
        <taxon>Staphylococcus</taxon>
    </lineage>
</organism>
<comment type="function">
    <text evidence="1">SbcCD cleaves DNA hairpin structures. These structures can inhibit DNA replication and are intermediates in certain DNA recombination reactions. The complex acts as a 3'-&gt;5' double strand exonuclease that can open hairpins. It also has a 5' single-strand endonuclease activity (By similarity).</text>
</comment>
<comment type="subunit">
    <text evidence="1">Heterodimer of SbcC and SbcD.</text>
</comment>
<comment type="similarity">
    <text evidence="2">Belongs to the SbcD family.</text>
</comment>
<proteinExistence type="inferred from homology"/>
<dbReference type="EMBL" id="CP000730">
    <property type="status" value="NOT_ANNOTATED_CDS"/>
    <property type="molecule type" value="Genomic_DNA"/>
</dbReference>
<dbReference type="RefSeq" id="WP_000691284.1">
    <property type="nucleotide sequence ID" value="NC_010079.1"/>
</dbReference>
<dbReference type="SMR" id="P0C7L6"/>
<dbReference type="GO" id="GO:0008408">
    <property type="term" value="F:3'-5' exonuclease activity"/>
    <property type="evidence" value="ECO:0007669"/>
    <property type="project" value="InterPro"/>
</dbReference>
<dbReference type="GO" id="GO:0004519">
    <property type="term" value="F:endonuclease activity"/>
    <property type="evidence" value="ECO:0007669"/>
    <property type="project" value="UniProtKB-KW"/>
</dbReference>
<dbReference type="GO" id="GO:0006310">
    <property type="term" value="P:DNA recombination"/>
    <property type="evidence" value="ECO:0007669"/>
    <property type="project" value="UniProtKB-KW"/>
</dbReference>
<dbReference type="GO" id="GO:0006260">
    <property type="term" value="P:DNA replication"/>
    <property type="evidence" value="ECO:0007669"/>
    <property type="project" value="UniProtKB-KW"/>
</dbReference>
<dbReference type="CDD" id="cd00840">
    <property type="entry name" value="MPP_Mre11_N"/>
    <property type="match status" value="1"/>
</dbReference>
<dbReference type="Gene3D" id="3.60.21.10">
    <property type="match status" value="1"/>
</dbReference>
<dbReference type="InterPro" id="IPR004843">
    <property type="entry name" value="Calcineurin-like_PHP_ApaH"/>
</dbReference>
<dbReference type="InterPro" id="IPR050535">
    <property type="entry name" value="DNA_Repair-Maintenance_Comp"/>
</dbReference>
<dbReference type="InterPro" id="IPR029052">
    <property type="entry name" value="Metallo-depent_PP-like"/>
</dbReference>
<dbReference type="InterPro" id="IPR041796">
    <property type="entry name" value="Mre11_N"/>
</dbReference>
<dbReference type="InterPro" id="IPR053381">
    <property type="entry name" value="SbcCD_nuclease"/>
</dbReference>
<dbReference type="InterPro" id="IPR004593">
    <property type="entry name" value="SbcD"/>
</dbReference>
<dbReference type="InterPro" id="IPR026843">
    <property type="entry name" value="SbcD_C"/>
</dbReference>
<dbReference type="NCBIfam" id="TIGR00619">
    <property type="entry name" value="sbcd"/>
    <property type="match status" value="1"/>
</dbReference>
<dbReference type="NCBIfam" id="NF041753">
    <property type="entry name" value="sbcd_Staph"/>
    <property type="match status" value="1"/>
</dbReference>
<dbReference type="PANTHER" id="PTHR30337">
    <property type="entry name" value="COMPONENT OF ATP-DEPENDENT DSDNA EXONUCLEASE"/>
    <property type="match status" value="1"/>
</dbReference>
<dbReference type="PANTHER" id="PTHR30337:SF0">
    <property type="entry name" value="NUCLEASE SBCCD SUBUNIT D"/>
    <property type="match status" value="1"/>
</dbReference>
<dbReference type="Pfam" id="PF00149">
    <property type="entry name" value="Metallophos"/>
    <property type="match status" value="1"/>
</dbReference>
<dbReference type="Pfam" id="PF12320">
    <property type="entry name" value="SbcD_C"/>
    <property type="match status" value="1"/>
</dbReference>
<dbReference type="SUPFAM" id="SSF56300">
    <property type="entry name" value="Metallo-dependent phosphatases"/>
    <property type="match status" value="1"/>
</dbReference>
<accession>P0C7L6</accession>
<name>SBCD_STAAT</name>
<reference key="1">
    <citation type="journal article" date="2007" name="BMC Microbiol.">
        <title>Subtle genetic changes enhance virulence of methicillin resistant and sensitive Staphylococcus aureus.</title>
        <authorList>
            <person name="Highlander S.K."/>
            <person name="Hulten K.G."/>
            <person name="Qin X."/>
            <person name="Jiang H."/>
            <person name="Yerrapragada S."/>
            <person name="Mason E.O. Jr."/>
            <person name="Shang Y."/>
            <person name="Williams T.M."/>
            <person name="Fortunov R.M."/>
            <person name="Liu Y."/>
            <person name="Igboeli O."/>
            <person name="Petrosino J."/>
            <person name="Tirumalai M."/>
            <person name="Uzman A."/>
            <person name="Fox G.E."/>
            <person name="Cardenas A.M."/>
            <person name="Muzny D.M."/>
            <person name="Hemphill L."/>
            <person name="Ding Y."/>
            <person name="Dugan S."/>
            <person name="Blyth P.R."/>
            <person name="Buhay C.J."/>
            <person name="Dinh H.H."/>
            <person name="Hawes A.C."/>
            <person name="Holder M."/>
            <person name="Kovar C.L."/>
            <person name="Lee S.L."/>
            <person name="Liu W."/>
            <person name="Nazareth L.V."/>
            <person name="Wang Q."/>
            <person name="Zhou J."/>
            <person name="Kaplan S.L."/>
            <person name="Weinstock G.M."/>
        </authorList>
    </citation>
    <scope>NUCLEOTIDE SEQUENCE [LARGE SCALE GENOMIC DNA]</scope>
    <source>
        <strain>USA300 / TCH1516</strain>
    </source>
</reference>
<gene>
    <name type="primary">sbcD</name>
    <name type="ordered locus">USA300HOU_1280.1</name>
</gene>